<gene>
    <name evidence="1" type="primary">fdhD</name>
    <name type="ordered locus">XCV2665</name>
</gene>
<comment type="function">
    <text evidence="1">Required for formate dehydrogenase (FDH) activity. Acts as a sulfur carrier protein that transfers sulfur from IscS to the molybdenum cofactor prior to its insertion into FDH.</text>
</comment>
<comment type="subcellular location">
    <subcellularLocation>
        <location evidence="1">Cytoplasm</location>
    </subcellularLocation>
</comment>
<comment type="similarity">
    <text evidence="1">Belongs to the FdhD family.</text>
</comment>
<reference key="1">
    <citation type="journal article" date="2005" name="J. Bacteriol.">
        <title>Insights into genome plasticity and pathogenicity of the plant pathogenic Bacterium Xanthomonas campestris pv. vesicatoria revealed by the complete genome sequence.</title>
        <authorList>
            <person name="Thieme F."/>
            <person name="Koebnik R."/>
            <person name="Bekel T."/>
            <person name="Berger C."/>
            <person name="Boch J."/>
            <person name="Buettner D."/>
            <person name="Caldana C."/>
            <person name="Gaigalat L."/>
            <person name="Goesmann A."/>
            <person name="Kay S."/>
            <person name="Kirchner O."/>
            <person name="Lanz C."/>
            <person name="Linke B."/>
            <person name="McHardy A.C."/>
            <person name="Meyer F."/>
            <person name="Mittenhuber G."/>
            <person name="Nies D.H."/>
            <person name="Niesbach-Kloesgen U."/>
            <person name="Patschkowski T."/>
            <person name="Rueckert C."/>
            <person name="Rupp O."/>
            <person name="Schneiker S."/>
            <person name="Schuster S.C."/>
            <person name="Vorhoelter F.J."/>
            <person name="Weber E."/>
            <person name="Puehler A."/>
            <person name="Bonas U."/>
            <person name="Bartels D."/>
            <person name="Kaiser O."/>
        </authorList>
    </citation>
    <scope>NUCLEOTIDE SEQUENCE [LARGE SCALE GENOMIC DNA]</scope>
    <source>
        <strain>85-10</strain>
    </source>
</reference>
<feature type="chain" id="PRO_1000020827" description="Sulfur carrier protein FdhD">
    <location>
        <begin position="1"/>
        <end position="281"/>
    </location>
</feature>
<feature type="active site" description="Cysteine persulfide intermediate" evidence="1">
    <location>
        <position position="117"/>
    </location>
</feature>
<dbReference type="EMBL" id="AM039952">
    <property type="protein sequence ID" value="CAJ24342.1"/>
    <property type="molecule type" value="Genomic_DNA"/>
</dbReference>
<dbReference type="RefSeq" id="WP_011347801.1">
    <property type="nucleotide sequence ID" value="NZ_CP017190.1"/>
</dbReference>
<dbReference type="SMR" id="Q3BS67"/>
<dbReference type="STRING" id="456327.BJD11_09540"/>
<dbReference type="KEGG" id="xcv:XCV2665"/>
<dbReference type="eggNOG" id="COG1526">
    <property type="taxonomic scope" value="Bacteria"/>
</dbReference>
<dbReference type="HOGENOM" id="CLU_056887_2_0_6"/>
<dbReference type="Proteomes" id="UP000007069">
    <property type="component" value="Chromosome"/>
</dbReference>
<dbReference type="GO" id="GO:0005737">
    <property type="term" value="C:cytoplasm"/>
    <property type="evidence" value="ECO:0007669"/>
    <property type="project" value="UniProtKB-SubCell"/>
</dbReference>
<dbReference type="GO" id="GO:0097163">
    <property type="term" value="F:sulfur carrier activity"/>
    <property type="evidence" value="ECO:0007669"/>
    <property type="project" value="UniProtKB-UniRule"/>
</dbReference>
<dbReference type="GO" id="GO:0016783">
    <property type="term" value="F:sulfurtransferase activity"/>
    <property type="evidence" value="ECO:0007669"/>
    <property type="project" value="InterPro"/>
</dbReference>
<dbReference type="GO" id="GO:0006777">
    <property type="term" value="P:Mo-molybdopterin cofactor biosynthetic process"/>
    <property type="evidence" value="ECO:0007669"/>
    <property type="project" value="UniProtKB-UniRule"/>
</dbReference>
<dbReference type="Gene3D" id="3.10.20.10">
    <property type="match status" value="1"/>
</dbReference>
<dbReference type="Gene3D" id="3.40.140.10">
    <property type="entry name" value="Cytidine Deaminase, domain 2"/>
    <property type="match status" value="1"/>
</dbReference>
<dbReference type="HAMAP" id="MF_00187">
    <property type="entry name" value="FdhD"/>
    <property type="match status" value="1"/>
</dbReference>
<dbReference type="InterPro" id="IPR016193">
    <property type="entry name" value="Cytidine_deaminase-like"/>
</dbReference>
<dbReference type="InterPro" id="IPR003786">
    <property type="entry name" value="FdhD"/>
</dbReference>
<dbReference type="NCBIfam" id="TIGR00129">
    <property type="entry name" value="fdhD_narQ"/>
    <property type="match status" value="1"/>
</dbReference>
<dbReference type="PANTHER" id="PTHR30592">
    <property type="entry name" value="FORMATE DEHYDROGENASE"/>
    <property type="match status" value="1"/>
</dbReference>
<dbReference type="PANTHER" id="PTHR30592:SF1">
    <property type="entry name" value="SULFUR CARRIER PROTEIN FDHD"/>
    <property type="match status" value="1"/>
</dbReference>
<dbReference type="Pfam" id="PF02634">
    <property type="entry name" value="FdhD-NarQ"/>
    <property type="match status" value="1"/>
</dbReference>
<dbReference type="PIRSF" id="PIRSF015626">
    <property type="entry name" value="FdhD"/>
    <property type="match status" value="1"/>
</dbReference>
<dbReference type="SUPFAM" id="SSF53927">
    <property type="entry name" value="Cytidine deaminase-like"/>
    <property type="match status" value="1"/>
</dbReference>
<protein>
    <recommendedName>
        <fullName evidence="1">Sulfur carrier protein FdhD</fullName>
    </recommendedName>
</protein>
<accession>Q3BS67</accession>
<proteinExistence type="inferred from homology"/>
<organism>
    <name type="scientific">Xanthomonas euvesicatoria pv. vesicatoria (strain 85-10)</name>
    <name type="common">Xanthomonas campestris pv. vesicatoria</name>
    <dbReference type="NCBI Taxonomy" id="316273"/>
    <lineage>
        <taxon>Bacteria</taxon>
        <taxon>Pseudomonadati</taxon>
        <taxon>Pseudomonadota</taxon>
        <taxon>Gammaproteobacteria</taxon>
        <taxon>Lysobacterales</taxon>
        <taxon>Lysobacteraceae</taxon>
        <taxon>Xanthomonas</taxon>
    </lineage>
</organism>
<keyword id="KW-0963">Cytoplasm</keyword>
<keyword id="KW-0501">Molybdenum cofactor biosynthesis</keyword>
<sequence>MTSPSSRSVRPGSVVRTVRRHRGGRSATVQDMVAAEMPVAFIYNGVPFAVMMATPEDLEDFALGFSLSEGIVDHAQDLRVIAVETFLEGASLQIEIPPERAAALDQRRRNLDGRSGCGVCGNESIEAVLRVPPVLHSSLQIDVDALAHALDALHARQPIAAQTGAVHAAAWADAQGNVQLVREDVGRHNALDKLIGALARARIDASHGFAVVTSRASYEMAMKAAQARIPLLAAISAPTALAISLAESAGLTLIGFARDHDCVVYSHPQRLDLGVAVGEPA</sequence>
<name>FDHD_XANE5</name>
<evidence type="ECO:0000255" key="1">
    <source>
        <dbReference type="HAMAP-Rule" id="MF_00187"/>
    </source>
</evidence>